<name>KAD_XYLF2</name>
<keyword id="KW-0067">ATP-binding</keyword>
<keyword id="KW-0963">Cytoplasm</keyword>
<keyword id="KW-0418">Kinase</keyword>
<keyword id="KW-0545">Nucleotide biosynthesis</keyword>
<keyword id="KW-0547">Nucleotide-binding</keyword>
<keyword id="KW-0808">Transferase</keyword>
<organism>
    <name type="scientific">Xylella fastidiosa (strain M23)</name>
    <dbReference type="NCBI Taxonomy" id="405441"/>
    <lineage>
        <taxon>Bacteria</taxon>
        <taxon>Pseudomonadati</taxon>
        <taxon>Pseudomonadota</taxon>
        <taxon>Gammaproteobacteria</taxon>
        <taxon>Lysobacterales</taxon>
        <taxon>Lysobacteraceae</taxon>
        <taxon>Xylella</taxon>
    </lineage>
</organism>
<dbReference type="EC" id="2.7.4.3" evidence="1"/>
<dbReference type="EMBL" id="CP001011">
    <property type="protein sequence ID" value="ACB91667.1"/>
    <property type="molecule type" value="Genomic_DNA"/>
</dbReference>
<dbReference type="RefSeq" id="WP_004087997.1">
    <property type="nucleotide sequence ID" value="NC_010577.1"/>
</dbReference>
<dbReference type="SMR" id="B2I757"/>
<dbReference type="KEGG" id="xfn:XfasM23_0210"/>
<dbReference type="HOGENOM" id="CLU_032354_1_2_6"/>
<dbReference type="UniPathway" id="UPA00588">
    <property type="reaction ID" value="UER00649"/>
</dbReference>
<dbReference type="Proteomes" id="UP000001698">
    <property type="component" value="Chromosome"/>
</dbReference>
<dbReference type="GO" id="GO:0005737">
    <property type="term" value="C:cytoplasm"/>
    <property type="evidence" value="ECO:0007669"/>
    <property type="project" value="UniProtKB-SubCell"/>
</dbReference>
<dbReference type="GO" id="GO:0004017">
    <property type="term" value="F:adenylate kinase activity"/>
    <property type="evidence" value="ECO:0007669"/>
    <property type="project" value="UniProtKB-UniRule"/>
</dbReference>
<dbReference type="GO" id="GO:0005524">
    <property type="term" value="F:ATP binding"/>
    <property type="evidence" value="ECO:0007669"/>
    <property type="project" value="UniProtKB-UniRule"/>
</dbReference>
<dbReference type="GO" id="GO:0044209">
    <property type="term" value="P:AMP salvage"/>
    <property type="evidence" value="ECO:0007669"/>
    <property type="project" value="UniProtKB-UniRule"/>
</dbReference>
<dbReference type="CDD" id="cd01428">
    <property type="entry name" value="ADK"/>
    <property type="match status" value="1"/>
</dbReference>
<dbReference type="Gene3D" id="3.40.50.300">
    <property type="entry name" value="P-loop containing nucleotide triphosphate hydrolases"/>
    <property type="match status" value="1"/>
</dbReference>
<dbReference type="HAMAP" id="MF_00235">
    <property type="entry name" value="Adenylate_kinase_Adk"/>
    <property type="match status" value="1"/>
</dbReference>
<dbReference type="InterPro" id="IPR000850">
    <property type="entry name" value="Adenylat/UMP-CMP_kin"/>
</dbReference>
<dbReference type="InterPro" id="IPR033690">
    <property type="entry name" value="Adenylat_kinase_CS"/>
</dbReference>
<dbReference type="InterPro" id="IPR027417">
    <property type="entry name" value="P-loop_NTPase"/>
</dbReference>
<dbReference type="NCBIfam" id="NF001381">
    <property type="entry name" value="PRK00279.1-3"/>
    <property type="match status" value="1"/>
</dbReference>
<dbReference type="NCBIfam" id="NF011100">
    <property type="entry name" value="PRK14527.1"/>
    <property type="match status" value="1"/>
</dbReference>
<dbReference type="NCBIfam" id="NF011104">
    <property type="entry name" value="PRK14531.1"/>
    <property type="match status" value="1"/>
</dbReference>
<dbReference type="NCBIfam" id="NF011105">
    <property type="entry name" value="PRK14532.1"/>
    <property type="match status" value="1"/>
</dbReference>
<dbReference type="PANTHER" id="PTHR23359">
    <property type="entry name" value="NUCLEOTIDE KINASE"/>
    <property type="match status" value="1"/>
</dbReference>
<dbReference type="Pfam" id="PF00406">
    <property type="entry name" value="ADK"/>
    <property type="match status" value="1"/>
</dbReference>
<dbReference type="PRINTS" id="PR00094">
    <property type="entry name" value="ADENYLTKNASE"/>
</dbReference>
<dbReference type="SUPFAM" id="SSF52540">
    <property type="entry name" value="P-loop containing nucleoside triphosphate hydrolases"/>
    <property type="match status" value="1"/>
</dbReference>
<dbReference type="PROSITE" id="PS00113">
    <property type="entry name" value="ADENYLATE_KINASE"/>
    <property type="match status" value="1"/>
</dbReference>
<gene>
    <name evidence="1" type="primary">adk</name>
    <name type="ordered locus">XfasM23_0210</name>
</gene>
<evidence type="ECO:0000255" key="1">
    <source>
        <dbReference type="HAMAP-Rule" id="MF_00235"/>
    </source>
</evidence>
<reference key="1">
    <citation type="journal article" date="2010" name="J. Bacteriol.">
        <title>Whole genome sequences of two Xylella fastidiosa strains (M12 and M23) causing almond leaf scorch disease in California.</title>
        <authorList>
            <person name="Chen J."/>
            <person name="Xie G."/>
            <person name="Han S."/>
            <person name="Chertkov O."/>
            <person name="Sims D."/>
            <person name="Civerolo E.L."/>
        </authorList>
    </citation>
    <scope>NUCLEOTIDE SEQUENCE [LARGE SCALE GENOMIC DNA]</scope>
    <source>
        <strain>M23</strain>
    </source>
</reference>
<sequence>MRLVLLGPPGSGKGTQAAQMQETLQIPHISTGDLLRSEVVAGTPLGLQAKQVMAQGDLVSDAILLGMLESRLSHTDVVKGFILDGYPRNLSQAAALDGLLAKFGHPLNAVVQLEVPTDVLVERIAGRAQAEGREDDTPDAVRKRLQVYNDSTAPVIGFYQQRGILLRVDGVGRLDEVSQRIAVALGC</sequence>
<proteinExistence type="inferred from homology"/>
<comment type="function">
    <text evidence="1">Catalyzes the reversible transfer of the terminal phosphate group between ATP and AMP. Plays an important role in cellular energy homeostasis and in adenine nucleotide metabolism.</text>
</comment>
<comment type="catalytic activity">
    <reaction evidence="1">
        <text>AMP + ATP = 2 ADP</text>
        <dbReference type="Rhea" id="RHEA:12973"/>
        <dbReference type="ChEBI" id="CHEBI:30616"/>
        <dbReference type="ChEBI" id="CHEBI:456215"/>
        <dbReference type="ChEBI" id="CHEBI:456216"/>
        <dbReference type="EC" id="2.7.4.3"/>
    </reaction>
</comment>
<comment type="pathway">
    <text evidence="1">Purine metabolism; AMP biosynthesis via salvage pathway; AMP from ADP: step 1/1.</text>
</comment>
<comment type="subunit">
    <text evidence="1">Monomer.</text>
</comment>
<comment type="subcellular location">
    <subcellularLocation>
        <location evidence="1">Cytoplasm</location>
    </subcellularLocation>
</comment>
<comment type="domain">
    <text evidence="1">Consists of three domains, a large central CORE domain and two small peripheral domains, NMPbind and LID, which undergo movements during catalysis. The LID domain closes over the site of phosphoryl transfer upon ATP binding. Assembling and dissambling the active center during each catalytic cycle provides an effective means to prevent ATP hydrolysis.</text>
</comment>
<comment type="similarity">
    <text evidence="1">Belongs to the adenylate kinase family.</text>
</comment>
<feature type="chain" id="PRO_1000100629" description="Adenylate kinase">
    <location>
        <begin position="1"/>
        <end position="187"/>
    </location>
</feature>
<feature type="region of interest" description="NMP" evidence="1">
    <location>
        <begin position="30"/>
        <end position="59"/>
    </location>
</feature>
<feature type="region of interest" description="LID" evidence="1">
    <location>
        <begin position="126"/>
        <end position="136"/>
    </location>
</feature>
<feature type="binding site" evidence="1">
    <location>
        <begin position="10"/>
        <end position="15"/>
    </location>
    <ligand>
        <name>ATP</name>
        <dbReference type="ChEBI" id="CHEBI:30616"/>
    </ligand>
</feature>
<feature type="binding site" evidence="1">
    <location>
        <position position="31"/>
    </location>
    <ligand>
        <name>AMP</name>
        <dbReference type="ChEBI" id="CHEBI:456215"/>
    </ligand>
</feature>
<feature type="binding site" evidence="1">
    <location>
        <position position="36"/>
    </location>
    <ligand>
        <name>AMP</name>
        <dbReference type="ChEBI" id="CHEBI:456215"/>
    </ligand>
</feature>
<feature type="binding site" evidence="1">
    <location>
        <begin position="57"/>
        <end position="59"/>
    </location>
    <ligand>
        <name>AMP</name>
        <dbReference type="ChEBI" id="CHEBI:456215"/>
    </ligand>
</feature>
<feature type="binding site" evidence="1">
    <location>
        <begin position="85"/>
        <end position="88"/>
    </location>
    <ligand>
        <name>AMP</name>
        <dbReference type="ChEBI" id="CHEBI:456215"/>
    </ligand>
</feature>
<feature type="binding site" evidence="1">
    <location>
        <position position="92"/>
    </location>
    <ligand>
        <name>AMP</name>
        <dbReference type="ChEBI" id="CHEBI:456215"/>
    </ligand>
</feature>
<feature type="binding site" evidence="1">
    <location>
        <position position="127"/>
    </location>
    <ligand>
        <name>ATP</name>
        <dbReference type="ChEBI" id="CHEBI:30616"/>
    </ligand>
</feature>
<feature type="binding site" evidence="1">
    <location>
        <position position="133"/>
    </location>
    <ligand>
        <name>AMP</name>
        <dbReference type="ChEBI" id="CHEBI:456215"/>
    </ligand>
</feature>
<feature type="binding site" evidence="1">
    <location>
        <position position="144"/>
    </location>
    <ligand>
        <name>AMP</name>
        <dbReference type="ChEBI" id="CHEBI:456215"/>
    </ligand>
</feature>
<feature type="binding site" evidence="1">
    <location>
        <position position="172"/>
    </location>
    <ligand>
        <name>ATP</name>
        <dbReference type="ChEBI" id="CHEBI:30616"/>
    </ligand>
</feature>
<accession>B2I757</accession>
<protein>
    <recommendedName>
        <fullName evidence="1">Adenylate kinase</fullName>
        <shortName evidence="1">AK</shortName>
        <ecNumber evidence="1">2.7.4.3</ecNumber>
    </recommendedName>
    <alternativeName>
        <fullName evidence="1">ATP-AMP transphosphorylase</fullName>
    </alternativeName>
    <alternativeName>
        <fullName evidence="1">ATP:AMP phosphotransferase</fullName>
    </alternativeName>
    <alternativeName>
        <fullName evidence="1">Adenylate monophosphate kinase</fullName>
    </alternativeName>
</protein>